<organism>
    <name type="scientific">Acinetobacter baumannii (strain AB0057)</name>
    <dbReference type="NCBI Taxonomy" id="480119"/>
    <lineage>
        <taxon>Bacteria</taxon>
        <taxon>Pseudomonadati</taxon>
        <taxon>Pseudomonadota</taxon>
        <taxon>Gammaproteobacteria</taxon>
        <taxon>Moraxellales</taxon>
        <taxon>Moraxellaceae</taxon>
        <taxon>Acinetobacter</taxon>
        <taxon>Acinetobacter calcoaceticus/baumannii complex</taxon>
    </lineage>
</organism>
<keyword id="KW-0067">ATP-binding</keyword>
<keyword id="KW-0131">Cell cycle</keyword>
<keyword id="KW-0132">Cell division</keyword>
<keyword id="KW-0133">Cell shape</keyword>
<keyword id="KW-0961">Cell wall biogenesis/degradation</keyword>
<keyword id="KW-0963">Cytoplasm</keyword>
<keyword id="KW-0436">Ligase</keyword>
<keyword id="KW-0547">Nucleotide-binding</keyword>
<keyword id="KW-0573">Peptidoglycan synthesis</keyword>
<accession>B7I325</accession>
<reference key="1">
    <citation type="journal article" date="2008" name="J. Bacteriol.">
        <title>Comparative genome sequence analysis of multidrug-resistant Acinetobacter baumannii.</title>
        <authorList>
            <person name="Adams M.D."/>
            <person name="Goglin K."/>
            <person name="Molyneaux N."/>
            <person name="Hujer K.M."/>
            <person name="Lavender H."/>
            <person name="Jamison J.J."/>
            <person name="MacDonald I.J."/>
            <person name="Martin K.M."/>
            <person name="Russo T."/>
            <person name="Campagnari A.A."/>
            <person name="Hujer A.M."/>
            <person name="Bonomo R.A."/>
            <person name="Gill S.R."/>
        </authorList>
    </citation>
    <scope>NUCLEOTIDE SEQUENCE [LARGE SCALE GENOMIC DNA]</scope>
    <source>
        <strain>AB0057</strain>
    </source>
</reference>
<protein>
    <recommendedName>
        <fullName evidence="1">UDP-N-acetylmuramoylalanine--D-glutamate ligase</fullName>
        <ecNumber evidence="1">6.3.2.9</ecNumber>
    </recommendedName>
    <alternativeName>
        <fullName evidence="1">D-glutamic acid-adding enzyme</fullName>
    </alternativeName>
    <alternativeName>
        <fullName evidence="1">UDP-N-acetylmuramoyl-L-alanyl-D-glutamate synthetase</fullName>
    </alternativeName>
</protein>
<proteinExistence type="inferred from homology"/>
<gene>
    <name evidence="1" type="primary">murD</name>
    <name type="ordered locus">AB57_0334</name>
</gene>
<dbReference type="EC" id="6.3.2.9" evidence="1"/>
<dbReference type="EMBL" id="CP001182">
    <property type="protein sequence ID" value="ACJ39760.1"/>
    <property type="molecule type" value="Genomic_DNA"/>
</dbReference>
<dbReference type="RefSeq" id="WP_000908240.1">
    <property type="nucleotide sequence ID" value="NC_011586.2"/>
</dbReference>
<dbReference type="SMR" id="B7I325"/>
<dbReference type="KEGG" id="abn:AB57_0334"/>
<dbReference type="HOGENOM" id="CLU_032540_1_0_6"/>
<dbReference type="UniPathway" id="UPA00219"/>
<dbReference type="Proteomes" id="UP000007094">
    <property type="component" value="Chromosome"/>
</dbReference>
<dbReference type="GO" id="GO:0005737">
    <property type="term" value="C:cytoplasm"/>
    <property type="evidence" value="ECO:0007669"/>
    <property type="project" value="UniProtKB-SubCell"/>
</dbReference>
<dbReference type="GO" id="GO:0005524">
    <property type="term" value="F:ATP binding"/>
    <property type="evidence" value="ECO:0007669"/>
    <property type="project" value="UniProtKB-UniRule"/>
</dbReference>
<dbReference type="GO" id="GO:0008764">
    <property type="term" value="F:UDP-N-acetylmuramoylalanine-D-glutamate ligase activity"/>
    <property type="evidence" value="ECO:0007669"/>
    <property type="project" value="UniProtKB-UniRule"/>
</dbReference>
<dbReference type="GO" id="GO:0051301">
    <property type="term" value="P:cell division"/>
    <property type="evidence" value="ECO:0007669"/>
    <property type="project" value="UniProtKB-KW"/>
</dbReference>
<dbReference type="GO" id="GO:0071555">
    <property type="term" value="P:cell wall organization"/>
    <property type="evidence" value="ECO:0007669"/>
    <property type="project" value="UniProtKB-KW"/>
</dbReference>
<dbReference type="GO" id="GO:0009252">
    <property type="term" value="P:peptidoglycan biosynthetic process"/>
    <property type="evidence" value="ECO:0007669"/>
    <property type="project" value="UniProtKB-UniRule"/>
</dbReference>
<dbReference type="GO" id="GO:0008360">
    <property type="term" value="P:regulation of cell shape"/>
    <property type="evidence" value="ECO:0007669"/>
    <property type="project" value="UniProtKB-KW"/>
</dbReference>
<dbReference type="Gene3D" id="3.90.190.20">
    <property type="entry name" value="Mur ligase, C-terminal domain"/>
    <property type="match status" value="1"/>
</dbReference>
<dbReference type="Gene3D" id="3.40.1190.10">
    <property type="entry name" value="Mur-like, catalytic domain"/>
    <property type="match status" value="1"/>
</dbReference>
<dbReference type="Gene3D" id="3.40.50.720">
    <property type="entry name" value="NAD(P)-binding Rossmann-like Domain"/>
    <property type="match status" value="1"/>
</dbReference>
<dbReference type="HAMAP" id="MF_00639">
    <property type="entry name" value="MurD"/>
    <property type="match status" value="1"/>
</dbReference>
<dbReference type="InterPro" id="IPR036565">
    <property type="entry name" value="Mur-like_cat_sf"/>
</dbReference>
<dbReference type="InterPro" id="IPR004101">
    <property type="entry name" value="Mur_ligase_C"/>
</dbReference>
<dbReference type="InterPro" id="IPR036615">
    <property type="entry name" value="Mur_ligase_C_dom_sf"/>
</dbReference>
<dbReference type="InterPro" id="IPR013221">
    <property type="entry name" value="Mur_ligase_cen"/>
</dbReference>
<dbReference type="InterPro" id="IPR005762">
    <property type="entry name" value="MurD"/>
</dbReference>
<dbReference type="NCBIfam" id="TIGR01087">
    <property type="entry name" value="murD"/>
    <property type="match status" value="1"/>
</dbReference>
<dbReference type="PANTHER" id="PTHR43692">
    <property type="entry name" value="UDP-N-ACETYLMURAMOYLALANINE--D-GLUTAMATE LIGASE"/>
    <property type="match status" value="1"/>
</dbReference>
<dbReference type="PANTHER" id="PTHR43692:SF1">
    <property type="entry name" value="UDP-N-ACETYLMURAMOYLALANINE--D-GLUTAMATE LIGASE"/>
    <property type="match status" value="1"/>
</dbReference>
<dbReference type="Pfam" id="PF02875">
    <property type="entry name" value="Mur_ligase_C"/>
    <property type="match status" value="1"/>
</dbReference>
<dbReference type="Pfam" id="PF08245">
    <property type="entry name" value="Mur_ligase_M"/>
    <property type="match status" value="1"/>
</dbReference>
<dbReference type="Pfam" id="PF21799">
    <property type="entry name" value="MurD-like_N"/>
    <property type="match status" value="1"/>
</dbReference>
<dbReference type="SUPFAM" id="SSF51984">
    <property type="entry name" value="MurCD N-terminal domain"/>
    <property type="match status" value="1"/>
</dbReference>
<dbReference type="SUPFAM" id="SSF53623">
    <property type="entry name" value="MurD-like peptide ligases, catalytic domain"/>
    <property type="match status" value="1"/>
</dbReference>
<dbReference type="SUPFAM" id="SSF53244">
    <property type="entry name" value="MurD-like peptide ligases, peptide-binding domain"/>
    <property type="match status" value="1"/>
</dbReference>
<comment type="function">
    <text evidence="1">Cell wall formation. Catalyzes the addition of glutamate to the nucleotide precursor UDP-N-acetylmuramoyl-L-alanine (UMA).</text>
</comment>
<comment type="catalytic activity">
    <reaction evidence="1">
        <text>UDP-N-acetyl-alpha-D-muramoyl-L-alanine + D-glutamate + ATP = UDP-N-acetyl-alpha-D-muramoyl-L-alanyl-D-glutamate + ADP + phosphate + H(+)</text>
        <dbReference type="Rhea" id="RHEA:16429"/>
        <dbReference type="ChEBI" id="CHEBI:15378"/>
        <dbReference type="ChEBI" id="CHEBI:29986"/>
        <dbReference type="ChEBI" id="CHEBI:30616"/>
        <dbReference type="ChEBI" id="CHEBI:43474"/>
        <dbReference type="ChEBI" id="CHEBI:83898"/>
        <dbReference type="ChEBI" id="CHEBI:83900"/>
        <dbReference type="ChEBI" id="CHEBI:456216"/>
        <dbReference type="EC" id="6.3.2.9"/>
    </reaction>
</comment>
<comment type="pathway">
    <text evidence="1">Cell wall biogenesis; peptidoglycan biosynthesis.</text>
</comment>
<comment type="subcellular location">
    <subcellularLocation>
        <location evidence="1">Cytoplasm</location>
    </subcellularLocation>
</comment>
<comment type="similarity">
    <text evidence="1">Belongs to the MurCDEF family.</text>
</comment>
<evidence type="ECO:0000255" key="1">
    <source>
        <dbReference type="HAMAP-Rule" id="MF_00639"/>
    </source>
</evidence>
<feature type="chain" id="PRO_1000130820" description="UDP-N-acetylmuramoylalanine--D-glutamate ligase">
    <location>
        <begin position="1"/>
        <end position="448"/>
    </location>
</feature>
<feature type="binding site" evidence="1">
    <location>
        <begin position="112"/>
        <end position="118"/>
    </location>
    <ligand>
        <name>ATP</name>
        <dbReference type="ChEBI" id="CHEBI:30616"/>
    </ligand>
</feature>
<sequence length="448" mass="47932">MLIQRGGLKVVAGLGISGVSAVNFLHEQGYQVAVTDSRPTPPGHDQIPAGVKTSFGQLDQELLLQAEEIILSPGLAPQLPEIQAAIAKGISVVGDIQLLRRATDVPIVAITGSNAKSTVTTLIGLMAKDAGKKVAVGGNLGRPALDLLKDQPELLVLELSSFQLETTSHLNAEVAVVLNMSEDHLDRHGNMLGYHQAKHRIFQGAKKVVFNRDDALSRPLVPDTTPMQSFGLNAPDLNQYGVLRDADGTLWLARGLQRLIKSSDLYIQGMHNVANALACLALGEAIGLPMESMLETLKQFKGLEHRCEYVKTVHDVRYYNDSKGTNVGATLAAIDGLGAAIEVKKGKVALILGGQGKGQDFGPLRSSIEKYAKVVVLIGEDAPVIEQAIQGATKILHAATLKEAVELCQRETQAEDVVLLSPACASFDMFKSYNDRGQQFVACVNSLV</sequence>
<name>MURD_ACIB5</name>